<accession>P38601</accession>
<dbReference type="EC" id="7.1.1.2" evidence="1"/>
<dbReference type="EMBL" id="X72004">
    <property type="protein sequence ID" value="CAA50886.1"/>
    <property type="molecule type" value="Genomic_DNA"/>
</dbReference>
<dbReference type="PIR" id="S41844">
    <property type="entry name" value="S41844"/>
</dbReference>
<dbReference type="RefSeq" id="NP_007078.1">
    <property type="nucleotide sequence ID" value="NC_001602.1"/>
</dbReference>
<dbReference type="SMR" id="P38601"/>
<dbReference type="GeneID" id="807752"/>
<dbReference type="CTD" id="4538"/>
<dbReference type="GO" id="GO:0005743">
    <property type="term" value="C:mitochondrial inner membrane"/>
    <property type="evidence" value="ECO:0000250"/>
    <property type="project" value="UniProtKB"/>
</dbReference>
<dbReference type="GO" id="GO:0008137">
    <property type="term" value="F:NADH dehydrogenase (ubiquinone) activity"/>
    <property type="evidence" value="ECO:0000250"/>
    <property type="project" value="UniProtKB"/>
</dbReference>
<dbReference type="GO" id="GO:0048039">
    <property type="term" value="F:ubiquinone binding"/>
    <property type="evidence" value="ECO:0007669"/>
    <property type="project" value="TreeGrafter"/>
</dbReference>
<dbReference type="GO" id="GO:0015990">
    <property type="term" value="P:electron transport coupled proton transport"/>
    <property type="evidence" value="ECO:0007669"/>
    <property type="project" value="TreeGrafter"/>
</dbReference>
<dbReference type="GO" id="GO:0006120">
    <property type="term" value="P:mitochondrial electron transport, NADH to ubiquinone"/>
    <property type="evidence" value="ECO:0000250"/>
    <property type="project" value="UniProtKB"/>
</dbReference>
<dbReference type="GO" id="GO:0032981">
    <property type="term" value="P:mitochondrial respiratory chain complex I assembly"/>
    <property type="evidence" value="ECO:0000250"/>
    <property type="project" value="UniProtKB"/>
</dbReference>
<dbReference type="InterPro" id="IPR000260">
    <property type="entry name" value="NADH4_N"/>
</dbReference>
<dbReference type="InterPro" id="IPR010227">
    <property type="entry name" value="NADH_Q_OxRdtase_chainM/4"/>
</dbReference>
<dbReference type="InterPro" id="IPR003918">
    <property type="entry name" value="NADH_UbQ_OxRdtase"/>
</dbReference>
<dbReference type="InterPro" id="IPR001750">
    <property type="entry name" value="ND/Mrp_TM"/>
</dbReference>
<dbReference type="NCBIfam" id="TIGR01972">
    <property type="entry name" value="NDH_I_M"/>
    <property type="match status" value="1"/>
</dbReference>
<dbReference type="PANTHER" id="PTHR43507">
    <property type="entry name" value="NADH-UBIQUINONE OXIDOREDUCTASE CHAIN 4"/>
    <property type="match status" value="1"/>
</dbReference>
<dbReference type="PANTHER" id="PTHR43507:SF20">
    <property type="entry name" value="NADH-UBIQUINONE OXIDOREDUCTASE CHAIN 4"/>
    <property type="match status" value="1"/>
</dbReference>
<dbReference type="Pfam" id="PF01059">
    <property type="entry name" value="Oxidored_q5_N"/>
    <property type="match status" value="1"/>
</dbReference>
<dbReference type="Pfam" id="PF00361">
    <property type="entry name" value="Proton_antipo_M"/>
    <property type="match status" value="1"/>
</dbReference>
<dbReference type="PRINTS" id="PR01437">
    <property type="entry name" value="NUOXDRDTASE4"/>
</dbReference>
<geneLocation type="mitochondrion"/>
<keyword id="KW-0249">Electron transport</keyword>
<keyword id="KW-0472">Membrane</keyword>
<keyword id="KW-0496">Mitochondrion</keyword>
<keyword id="KW-0999">Mitochondrion inner membrane</keyword>
<keyword id="KW-0520">NAD</keyword>
<keyword id="KW-0679">Respiratory chain</keyword>
<keyword id="KW-1278">Translocase</keyword>
<keyword id="KW-0812">Transmembrane</keyword>
<keyword id="KW-1133">Transmembrane helix</keyword>
<keyword id="KW-0813">Transport</keyword>
<keyword id="KW-0830">Ubiquinone</keyword>
<organism>
    <name type="scientific">Halichoerus grypus</name>
    <name type="common">Gray seal</name>
    <name type="synonym">Phoca grypus</name>
    <dbReference type="NCBI Taxonomy" id="9711"/>
    <lineage>
        <taxon>Eukaryota</taxon>
        <taxon>Metazoa</taxon>
        <taxon>Chordata</taxon>
        <taxon>Craniata</taxon>
        <taxon>Vertebrata</taxon>
        <taxon>Euteleostomi</taxon>
        <taxon>Mammalia</taxon>
        <taxon>Eutheria</taxon>
        <taxon>Laurasiatheria</taxon>
        <taxon>Carnivora</taxon>
        <taxon>Caniformia</taxon>
        <taxon>Pinnipedia</taxon>
        <taxon>Phocidae</taxon>
        <taxon>Phocinae</taxon>
        <taxon>Halichoerus</taxon>
    </lineage>
</organism>
<evidence type="ECO:0000250" key="1">
    <source>
        <dbReference type="UniProtKB" id="P03905"/>
    </source>
</evidence>
<evidence type="ECO:0000250" key="2">
    <source>
        <dbReference type="UniProtKB" id="P03910"/>
    </source>
</evidence>
<evidence type="ECO:0000255" key="3"/>
<evidence type="ECO:0000305" key="4"/>
<protein>
    <recommendedName>
        <fullName>NADH-ubiquinone oxidoreductase chain 4</fullName>
        <ecNumber evidence="1">7.1.1.2</ecNumber>
    </recommendedName>
    <alternativeName>
        <fullName>NADH dehydrogenase subunit 4</fullName>
    </alternativeName>
</protein>
<sequence length="459" mass="51642">MLKIIIPTMMLMPLTWMSKPNMIWINTTAYSLLISLISLSFLNQLGDNCMSLSLLFFTDSLSAPLLALTTWLLPLMLMASQFHLSKEPLARKKLYITMLILLQLFLIMTFTATELIMFYILFEATLVPTLIIITRWGNQTERLNAGTYFLFYTLVGSLPLLVALLFIQNNMGTLNFLMIQLWAQPLPSSWSNTLLWLACMMAFMVKMPLYGLHLWLPKAHVEAPIAGSMVLAAVLLKLGGYGMMRITALLSPLTSFMAYPFMMLSLWGMTMTSSICLRQTDLKSLIAYSSVSHMALVIVAILIQTPWSYMGATALMIAHGLTSSVLFCLANSNYERTHSRTMILARGLQVLLPLMAAWWLLASLTNLALPPTINLIGELFVVMASFSWSNITIILMGTNIIITALYSLYMLITTQRGKYTYHIKNIKPSFTRENALMTLHLMPLLLLSLNPKVILGPIY</sequence>
<proteinExistence type="inferred from homology"/>
<comment type="function">
    <text evidence="1">Core subunit of the mitochondrial membrane respiratory chain NADH dehydrogenase (Complex I) which catalyzes electron transfer from NADH through the respiratory chain, using ubiquinone as an electron acceptor. Essential for the catalytic activity and assembly of complex I.</text>
</comment>
<comment type="catalytic activity">
    <reaction evidence="1">
        <text>a ubiquinone + NADH + 5 H(+)(in) = a ubiquinol + NAD(+) + 4 H(+)(out)</text>
        <dbReference type="Rhea" id="RHEA:29091"/>
        <dbReference type="Rhea" id="RHEA-COMP:9565"/>
        <dbReference type="Rhea" id="RHEA-COMP:9566"/>
        <dbReference type="ChEBI" id="CHEBI:15378"/>
        <dbReference type="ChEBI" id="CHEBI:16389"/>
        <dbReference type="ChEBI" id="CHEBI:17976"/>
        <dbReference type="ChEBI" id="CHEBI:57540"/>
        <dbReference type="ChEBI" id="CHEBI:57945"/>
        <dbReference type="EC" id="7.1.1.2"/>
    </reaction>
</comment>
<comment type="subunit">
    <text evidence="2">Core subunit of respiratory chain NADH dehydrogenase (Complex I) which is composed of 45 different subunits.</text>
</comment>
<comment type="subcellular location">
    <subcellularLocation>
        <location evidence="2">Mitochondrion inner membrane</location>
        <topology evidence="3">Multi-pass membrane protein</topology>
    </subcellularLocation>
</comment>
<comment type="similarity">
    <text evidence="4">Belongs to the complex I subunit 4 family.</text>
</comment>
<gene>
    <name type="primary">MT-ND4</name>
    <name type="synonym">MTND4</name>
    <name type="synonym">NADH4</name>
    <name type="synonym">ND4</name>
</gene>
<reference key="1">
    <citation type="journal article" date="1993" name="J. Mol. Evol.">
        <title>The nucleotide sequence of the mitochondrial DNA molecule of the grey seal, Halichoerus grypus, and a comparison with mitochondrial sequences of other true seals.</title>
        <authorList>
            <person name="Arnason U."/>
            <person name="Gullberg A."/>
            <person name="Johnsson E."/>
            <person name="Ledje C."/>
        </authorList>
    </citation>
    <scope>NUCLEOTIDE SEQUENCE [GENOMIC DNA]</scope>
</reference>
<feature type="chain" id="PRO_0000117938" description="NADH-ubiquinone oxidoreductase chain 4">
    <location>
        <begin position="1"/>
        <end position="459"/>
    </location>
</feature>
<feature type="transmembrane region" description="Helical" evidence="3">
    <location>
        <begin position="22"/>
        <end position="42"/>
    </location>
</feature>
<feature type="transmembrane region" description="Helical" evidence="3">
    <location>
        <begin position="60"/>
        <end position="80"/>
    </location>
</feature>
<feature type="transmembrane region" description="Helical" evidence="3">
    <location>
        <begin position="98"/>
        <end position="118"/>
    </location>
</feature>
<feature type="transmembrane region" description="Helical" evidence="3">
    <location>
        <begin position="147"/>
        <end position="167"/>
    </location>
</feature>
<feature type="transmembrane region" description="Helical" evidence="3">
    <location>
        <begin position="194"/>
        <end position="214"/>
    </location>
</feature>
<feature type="transmembrane region" description="Helical" evidence="3">
    <location>
        <begin position="224"/>
        <end position="244"/>
    </location>
</feature>
<feature type="transmembrane region" description="Helical" evidence="3">
    <location>
        <begin position="255"/>
        <end position="277"/>
    </location>
</feature>
<feature type="transmembrane region" description="Helical" evidence="3">
    <location>
        <begin position="284"/>
        <end position="303"/>
    </location>
</feature>
<feature type="transmembrane region" description="Helical" evidence="3">
    <location>
        <begin position="308"/>
        <end position="330"/>
    </location>
</feature>
<feature type="transmembrane region" description="Helical" evidence="3">
    <location>
        <begin position="350"/>
        <end position="370"/>
    </location>
</feature>
<feature type="transmembrane region" description="Helical" evidence="3">
    <location>
        <begin position="391"/>
        <end position="411"/>
    </location>
</feature>
<feature type="transmembrane region" description="Helical" evidence="3">
    <location>
        <begin position="435"/>
        <end position="455"/>
    </location>
</feature>
<name>NU4M_HALGR</name>